<evidence type="ECO:0000255" key="1">
    <source>
        <dbReference type="HAMAP-Rule" id="MF_03006"/>
    </source>
</evidence>
<evidence type="ECO:0000256" key="2">
    <source>
        <dbReference type="SAM" id="MobiDB-lite"/>
    </source>
</evidence>
<sequence>MSKLGNRADWADDEEFDDPSALPPQQITTNKDGTKTIVSYRFNDEGKKVKVTRRIKTTVVREHVNPQVAERRSWAKFGLEKGNAPGPSFDTTSVGENIVFRPSVNWKLQAAEAEKNGGEKGSVKDQLKDKKVKCRICSGEHFTARCPFKDTMAPVDEPTAGGEAGDEDSPAAGALGAGTSSYVPPHLRKGAAGGGERMAGKYEKDDLATLRVTNVSELAEEGELRDLFERFGRVTRVFLARDRETQRAKGFAFISFADRSDAARACEKMDGFGYRHLILRVEFAKRAT</sequence>
<organism>
    <name type="scientific">Aspergillus niger (strain ATCC MYA-4892 / CBS 513.88 / FGSC A1513)</name>
    <dbReference type="NCBI Taxonomy" id="425011"/>
    <lineage>
        <taxon>Eukaryota</taxon>
        <taxon>Fungi</taxon>
        <taxon>Dikarya</taxon>
        <taxon>Ascomycota</taxon>
        <taxon>Pezizomycotina</taxon>
        <taxon>Eurotiomycetes</taxon>
        <taxon>Eurotiomycetidae</taxon>
        <taxon>Eurotiales</taxon>
        <taxon>Aspergillaceae</taxon>
        <taxon>Aspergillus</taxon>
        <taxon>Aspergillus subgen. Circumdati</taxon>
    </lineage>
</organism>
<gene>
    <name type="primary">tif35</name>
    <name type="ORF">An16g05260</name>
</gene>
<accession>A2R7Z2</accession>
<comment type="function">
    <text evidence="1">RNA-binding component of the eukaryotic translation initiation factor 3 (eIF-3) complex, which is involved in protein synthesis of a specialized repertoire of mRNAs and, together with other initiation factors, stimulates binding of mRNA and methionyl-tRNAi to the 40S ribosome. The eIF-3 complex specifically targets and initiates translation of a subset of mRNAs involved in cell proliferation. This subunit can bind 18S rRNA.</text>
</comment>
<comment type="subunit">
    <text evidence="1">Component of the eukaryotic translation initiation factor 3 (eIF-3) complex.</text>
</comment>
<comment type="subcellular location">
    <subcellularLocation>
        <location evidence="1">Cytoplasm</location>
    </subcellularLocation>
</comment>
<comment type="similarity">
    <text evidence="1">Belongs to the eIF-3 subunit G family.</text>
</comment>
<reference key="1">
    <citation type="journal article" date="2007" name="Nat. Biotechnol.">
        <title>Genome sequencing and analysis of the versatile cell factory Aspergillus niger CBS 513.88.</title>
        <authorList>
            <person name="Pel H.J."/>
            <person name="de Winde J.H."/>
            <person name="Archer D.B."/>
            <person name="Dyer P.S."/>
            <person name="Hofmann G."/>
            <person name="Schaap P.J."/>
            <person name="Turner G."/>
            <person name="de Vries R.P."/>
            <person name="Albang R."/>
            <person name="Albermann K."/>
            <person name="Andersen M.R."/>
            <person name="Bendtsen J.D."/>
            <person name="Benen J.A.E."/>
            <person name="van den Berg M."/>
            <person name="Breestraat S."/>
            <person name="Caddick M.X."/>
            <person name="Contreras R."/>
            <person name="Cornell M."/>
            <person name="Coutinho P.M."/>
            <person name="Danchin E.G.J."/>
            <person name="Debets A.J.M."/>
            <person name="Dekker P."/>
            <person name="van Dijck P.W.M."/>
            <person name="van Dijk A."/>
            <person name="Dijkhuizen L."/>
            <person name="Driessen A.J.M."/>
            <person name="d'Enfert C."/>
            <person name="Geysens S."/>
            <person name="Goosen C."/>
            <person name="Groot G.S.P."/>
            <person name="de Groot P.W.J."/>
            <person name="Guillemette T."/>
            <person name="Henrissat B."/>
            <person name="Herweijer M."/>
            <person name="van den Hombergh J.P.T.W."/>
            <person name="van den Hondel C.A.M.J.J."/>
            <person name="van der Heijden R.T.J.M."/>
            <person name="van der Kaaij R.M."/>
            <person name="Klis F.M."/>
            <person name="Kools H.J."/>
            <person name="Kubicek C.P."/>
            <person name="van Kuyk P.A."/>
            <person name="Lauber J."/>
            <person name="Lu X."/>
            <person name="van der Maarel M.J.E.C."/>
            <person name="Meulenberg R."/>
            <person name="Menke H."/>
            <person name="Mortimer M.A."/>
            <person name="Nielsen J."/>
            <person name="Oliver S.G."/>
            <person name="Olsthoorn M."/>
            <person name="Pal K."/>
            <person name="van Peij N.N.M.E."/>
            <person name="Ram A.F.J."/>
            <person name="Rinas U."/>
            <person name="Roubos J.A."/>
            <person name="Sagt C.M.J."/>
            <person name="Schmoll M."/>
            <person name="Sun J."/>
            <person name="Ussery D."/>
            <person name="Varga J."/>
            <person name="Vervecken W."/>
            <person name="van de Vondervoort P.J.J."/>
            <person name="Wedler H."/>
            <person name="Woesten H.A.B."/>
            <person name="Zeng A.-P."/>
            <person name="van Ooyen A.J.J."/>
            <person name="Visser J."/>
            <person name="Stam H."/>
        </authorList>
    </citation>
    <scope>NUCLEOTIDE SEQUENCE [LARGE SCALE GENOMIC DNA]</scope>
    <source>
        <strain>ATCC MYA-4892 / CBS 513.88 / FGSC A1513</strain>
    </source>
</reference>
<keyword id="KW-0963">Cytoplasm</keyword>
<keyword id="KW-0396">Initiation factor</keyword>
<keyword id="KW-0648">Protein biosynthesis</keyword>
<keyword id="KW-1185">Reference proteome</keyword>
<keyword id="KW-0694">RNA-binding</keyword>
<feature type="chain" id="PRO_0000365435" description="Eukaryotic translation initiation factor 3 subunit G">
    <location>
        <begin position="1"/>
        <end position="288"/>
    </location>
</feature>
<feature type="domain" description="RRM" evidence="1">
    <location>
        <begin position="208"/>
        <end position="286"/>
    </location>
</feature>
<feature type="region of interest" description="Disordered" evidence="2">
    <location>
        <begin position="1"/>
        <end position="33"/>
    </location>
</feature>
<feature type="region of interest" description="Disordered" evidence="2">
    <location>
        <begin position="156"/>
        <end position="197"/>
    </location>
</feature>
<protein>
    <recommendedName>
        <fullName evidence="1">Eukaryotic translation initiation factor 3 subunit G</fullName>
        <shortName evidence="1">eIF3g</shortName>
    </recommendedName>
    <alternativeName>
        <fullName evidence="1">Eukaryotic translation initiation factor 3 RNA-binding subunit</fullName>
        <shortName evidence="1">eIF-3 RNA-binding subunit</shortName>
    </alternativeName>
    <alternativeName>
        <fullName evidence="1">Translation initiation factor eIF3 p33 subunit homolog</fullName>
        <shortName evidence="1">eIF3 p33 homolog</shortName>
    </alternativeName>
</protein>
<dbReference type="EMBL" id="AM270370">
    <property type="protein sequence ID" value="CAK97380.1"/>
    <property type="molecule type" value="Genomic_DNA"/>
</dbReference>
<dbReference type="RefSeq" id="XP_001397834.1">
    <property type="nucleotide sequence ID" value="XM_001397797.2"/>
</dbReference>
<dbReference type="SMR" id="A2R7Z2"/>
<dbReference type="EnsemblFungi" id="CAK97380">
    <property type="protein sequence ID" value="CAK97380"/>
    <property type="gene ID" value="An16g05260"/>
</dbReference>
<dbReference type="GeneID" id="4988918"/>
<dbReference type="KEGG" id="ang:An16g05260"/>
<dbReference type="VEuPathDB" id="FungiDB:An16g05260"/>
<dbReference type="HOGENOM" id="CLU_034595_0_0_1"/>
<dbReference type="Proteomes" id="UP000006706">
    <property type="component" value="Chromosome 5R"/>
</dbReference>
<dbReference type="GO" id="GO:0016282">
    <property type="term" value="C:eukaryotic 43S preinitiation complex"/>
    <property type="evidence" value="ECO:0007669"/>
    <property type="project" value="UniProtKB-UniRule"/>
</dbReference>
<dbReference type="GO" id="GO:0033290">
    <property type="term" value="C:eukaryotic 48S preinitiation complex"/>
    <property type="evidence" value="ECO:0007669"/>
    <property type="project" value="UniProtKB-UniRule"/>
</dbReference>
<dbReference type="GO" id="GO:0071540">
    <property type="term" value="C:eukaryotic translation initiation factor 3 complex, eIF3e"/>
    <property type="evidence" value="ECO:0007669"/>
    <property type="project" value="EnsemblFungi"/>
</dbReference>
<dbReference type="GO" id="GO:0071541">
    <property type="term" value="C:eukaryotic translation initiation factor 3 complex, eIF3m"/>
    <property type="evidence" value="ECO:0007669"/>
    <property type="project" value="EnsemblFungi"/>
</dbReference>
<dbReference type="GO" id="GO:0043614">
    <property type="term" value="C:multi-eIF complex"/>
    <property type="evidence" value="ECO:0007669"/>
    <property type="project" value="EnsemblFungi"/>
</dbReference>
<dbReference type="GO" id="GO:0003723">
    <property type="term" value="F:RNA binding"/>
    <property type="evidence" value="ECO:0007669"/>
    <property type="project" value="UniProtKB-UniRule"/>
</dbReference>
<dbReference type="GO" id="GO:0003743">
    <property type="term" value="F:translation initiation factor activity"/>
    <property type="evidence" value="ECO:0007669"/>
    <property type="project" value="UniProtKB-UniRule"/>
</dbReference>
<dbReference type="GO" id="GO:0001732">
    <property type="term" value="P:formation of cytoplasmic translation initiation complex"/>
    <property type="evidence" value="ECO:0007669"/>
    <property type="project" value="UniProtKB-UniRule"/>
</dbReference>
<dbReference type="GO" id="GO:0002188">
    <property type="term" value="P:translation reinitiation"/>
    <property type="evidence" value="ECO:0007669"/>
    <property type="project" value="EnsemblFungi"/>
</dbReference>
<dbReference type="GO" id="GO:0006415">
    <property type="term" value="P:translational termination"/>
    <property type="evidence" value="ECO:0007669"/>
    <property type="project" value="EnsemblFungi"/>
</dbReference>
<dbReference type="CDD" id="cd12933">
    <property type="entry name" value="eIF3G"/>
    <property type="match status" value="1"/>
</dbReference>
<dbReference type="CDD" id="cd12408">
    <property type="entry name" value="RRM_eIF3G_like"/>
    <property type="match status" value="1"/>
</dbReference>
<dbReference type="FunFam" id="3.30.70.330:FF:000328">
    <property type="entry name" value="Eukaryotic translation initiation factor 3 subunit G"/>
    <property type="match status" value="1"/>
</dbReference>
<dbReference type="Gene3D" id="3.30.70.330">
    <property type="match status" value="1"/>
</dbReference>
<dbReference type="HAMAP" id="MF_03006">
    <property type="entry name" value="eIF3g"/>
    <property type="match status" value="1"/>
</dbReference>
<dbReference type="InterPro" id="IPR017334">
    <property type="entry name" value="eIF3_g"/>
</dbReference>
<dbReference type="InterPro" id="IPR024675">
    <property type="entry name" value="eIF3g_N"/>
</dbReference>
<dbReference type="InterPro" id="IPR034240">
    <property type="entry name" value="eIF3G_RRM"/>
</dbReference>
<dbReference type="InterPro" id="IPR012677">
    <property type="entry name" value="Nucleotide-bd_a/b_plait_sf"/>
</dbReference>
<dbReference type="InterPro" id="IPR035979">
    <property type="entry name" value="RBD_domain_sf"/>
</dbReference>
<dbReference type="InterPro" id="IPR000504">
    <property type="entry name" value="RRM_dom"/>
</dbReference>
<dbReference type="PANTHER" id="PTHR10352">
    <property type="entry name" value="EUKARYOTIC TRANSLATION INITIATION FACTOR 3 SUBUNIT G"/>
    <property type="match status" value="1"/>
</dbReference>
<dbReference type="Pfam" id="PF12353">
    <property type="entry name" value="eIF3g"/>
    <property type="match status" value="1"/>
</dbReference>
<dbReference type="Pfam" id="PF00076">
    <property type="entry name" value="RRM_1"/>
    <property type="match status" value="1"/>
</dbReference>
<dbReference type="PIRSF" id="PIRSF037949">
    <property type="entry name" value="Transl_init_eIF-3_RNA-bind"/>
    <property type="match status" value="1"/>
</dbReference>
<dbReference type="SMART" id="SM00360">
    <property type="entry name" value="RRM"/>
    <property type="match status" value="1"/>
</dbReference>
<dbReference type="SUPFAM" id="SSF54928">
    <property type="entry name" value="RNA-binding domain, RBD"/>
    <property type="match status" value="1"/>
</dbReference>
<dbReference type="PROSITE" id="PS50102">
    <property type="entry name" value="RRM"/>
    <property type="match status" value="1"/>
</dbReference>
<proteinExistence type="inferred from homology"/>
<name>EIF3G_ASPNC</name>